<accession>Q921X6</accession>
<accession>Q544K6</accession>
<evidence type="ECO:0000250" key="1"/>
<evidence type="ECO:0000250" key="2">
    <source>
        <dbReference type="UniProtKB" id="Q9H1D9"/>
    </source>
</evidence>
<evidence type="ECO:0000305" key="3"/>
<evidence type="ECO:0000312" key="4">
    <source>
        <dbReference type="MGI" id="MGI:1924086"/>
    </source>
</evidence>
<evidence type="ECO:0007829" key="5">
    <source>
        <dbReference type="PDB" id="2DK8"/>
    </source>
</evidence>
<protein>
    <recommendedName>
        <fullName>DNA-directed RNA polymerase III subunit RPC6</fullName>
        <shortName>RNA polymerase III subunit C6</shortName>
    </recommendedName>
    <alternativeName>
        <fullName>DNA-directed RNA polymerase III subunit F</fullName>
    </alternativeName>
</protein>
<name>RPC6_MOUSE</name>
<dbReference type="EMBL" id="AK036166">
    <property type="protein sequence ID" value="BAC29327.1"/>
    <property type="molecule type" value="mRNA"/>
</dbReference>
<dbReference type="EMBL" id="AK076538">
    <property type="protein sequence ID" value="BAC36385.1"/>
    <property type="molecule type" value="mRNA"/>
</dbReference>
<dbReference type="EMBL" id="AK144679">
    <property type="protein sequence ID" value="BAE26008.1"/>
    <property type="molecule type" value="mRNA"/>
</dbReference>
<dbReference type="EMBL" id="BC009159">
    <property type="protein sequence ID" value="AAH09159.1"/>
    <property type="molecule type" value="mRNA"/>
</dbReference>
<dbReference type="CCDS" id="CCDS16820.1"/>
<dbReference type="RefSeq" id="NP_084039.2">
    <property type="nucleotide sequence ID" value="NM_029763.3"/>
</dbReference>
<dbReference type="PDB" id="2DK8">
    <property type="method" value="NMR"/>
    <property type="chains" value="A=11-78"/>
</dbReference>
<dbReference type="PDBsum" id="2DK8"/>
<dbReference type="SMR" id="Q921X6"/>
<dbReference type="BioGRID" id="214030">
    <property type="interactions" value="17"/>
</dbReference>
<dbReference type="FunCoup" id="Q921X6">
    <property type="interactions" value="2347"/>
</dbReference>
<dbReference type="IntAct" id="Q921X6">
    <property type="interactions" value="3"/>
</dbReference>
<dbReference type="STRING" id="10090.ENSMUSP00000028914"/>
<dbReference type="iPTMnet" id="Q921X6"/>
<dbReference type="PhosphoSitePlus" id="Q921X6"/>
<dbReference type="PaxDb" id="10090-ENSMUSP00000028914"/>
<dbReference type="ProteomicsDB" id="300477"/>
<dbReference type="Pumba" id="Q921X6"/>
<dbReference type="Antibodypedia" id="24572">
    <property type="antibodies" value="201 antibodies from 30 providers"/>
</dbReference>
<dbReference type="DNASU" id="70408"/>
<dbReference type="Ensembl" id="ENSMUST00000028914.9">
    <property type="protein sequence ID" value="ENSMUSP00000028914.3"/>
    <property type="gene ID" value="ENSMUSG00000027427.14"/>
</dbReference>
<dbReference type="GeneID" id="70408"/>
<dbReference type="KEGG" id="mmu:70408"/>
<dbReference type="UCSC" id="uc008mrg.1">
    <property type="organism name" value="mouse"/>
</dbReference>
<dbReference type="AGR" id="MGI:1924086"/>
<dbReference type="CTD" id="10621"/>
<dbReference type="MGI" id="MGI:1924086">
    <property type="gene designation" value="Polr3f"/>
</dbReference>
<dbReference type="VEuPathDB" id="HostDB:ENSMUSG00000027427"/>
<dbReference type="eggNOG" id="KOG3233">
    <property type="taxonomic scope" value="Eukaryota"/>
</dbReference>
<dbReference type="GeneTree" id="ENSGT00390000009679"/>
<dbReference type="HOGENOM" id="CLU_033661_1_0_1"/>
<dbReference type="InParanoid" id="Q921X6"/>
<dbReference type="OMA" id="VGTTKKC"/>
<dbReference type="OrthoDB" id="613763at2759"/>
<dbReference type="PhylomeDB" id="Q921X6"/>
<dbReference type="TreeFam" id="TF103051"/>
<dbReference type="Reactome" id="R-MMU-76061">
    <property type="pathway name" value="RNA Polymerase III Transcription Initiation From Type 1 Promoter"/>
</dbReference>
<dbReference type="Reactome" id="R-MMU-76066">
    <property type="pathway name" value="RNA Polymerase III Transcription Initiation From Type 2 Promoter"/>
</dbReference>
<dbReference type="Reactome" id="R-MMU-76071">
    <property type="pathway name" value="RNA Polymerase III Transcription Initiation From Type 3 Promoter"/>
</dbReference>
<dbReference type="BioGRID-ORCS" id="70408">
    <property type="hits" value="16 hits in 78 CRISPR screens"/>
</dbReference>
<dbReference type="EvolutionaryTrace" id="Q921X6"/>
<dbReference type="PRO" id="PR:Q921X6"/>
<dbReference type="Proteomes" id="UP000000589">
    <property type="component" value="Chromosome 2"/>
</dbReference>
<dbReference type="RNAct" id="Q921X6">
    <property type="molecule type" value="protein"/>
</dbReference>
<dbReference type="Bgee" id="ENSMUSG00000027427">
    <property type="expression patterns" value="Expressed in saccule of membranous labyrinth and 251 other cell types or tissues"/>
</dbReference>
<dbReference type="ExpressionAtlas" id="Q921X6">
    <property type="expression patterns" value="baseline and differential"/>
</dbReference>
<dbReference type="GO" id="GO:0005666">
    <property type="term" value="C:RNA polymerase III complex"/>
    <property type="evidence" value="ECO:0000266"/>
    <property type="project" value="MGI"/>
</dbReference>
<dbReference type="GO" id="GO:0051539">
    <property type="term" value="F:4 iron, 4 sulfur cluster binding"/>
    <property type="evidence" value="ECO:0007669"/>
    <property type="project" value="Ensembl"/>
</dbReference>
<dbReference type="GO" id="GO:0003690">
    <property type="term" value="F:double-stranded DNA binding"/>
    <property type="evidence" value="ECO:0000250"/>
    <property type="project" value="UniProtKB"/>
</dbReference>
<dbReference type="GO" id="GO:0046872">
    <property type="term" value="F:metal ion binding"/>
    <property type="evidence" value="ECO:0007669"/>
    <property type="project" value="UniProtKB-KW"/>
</dbReference>
<dbReference type="GO" id="GO:0051607">
    <property type="term" value="P:defense response to virus"/>
    <property type="evidence" value="ECO:0007669"/>
    <property type="project" value="UniProtKB-KW"/>
</dbReference>
<dbReference type="GO" id="GO:0045087">
    <property type="term" value="P:innate immune response"/>
    <property type="evidence" value="ECO:0007669"/>
    <property type="project" value="UniProtKB-KW"/>
</dbReference>
<dbReference type="GO" id="GO:0045089">
    <property type="term" value="P:positive regulation of innate immune response"/>
    <property type="evidence" value="ECO:0000250"/>
    <property type="project" value="UniProtKB"/>
</dbReference>
<dbReference type="GO" id="GO:0032728">
    <property type="term" value="P:positive regulation of interferon-beta production"/>
    <property type="evidence" value="ECO:0000250"/>
    <property type="project" value="UniProtKB"/>
</dbReference>
<dbReference type="GO" id="GO:0006383">
    <property type="term" value="P:transcription by RNA polymerase III"/>
    <property type="evidence" value="ECO:0007669"/>
    <property type="project" value="InterPro"/>
</dbReference>
<dbReference type="FunFam" id="1.10.10.10:FF:000116">
    <property type="entry name" value="DNA-directed RNA polymerase III subunit RPC6"/>
    <property type="match status" value="1"/>
</dbReference>
<dbReference type="FunFam" id="1.10.10.10:FF:000237">
    <property type="entry name" value="DNA-directed RNA polymerase III subunit RPC6"/>
    <property type="match status" value="1"/>
</dbReference>
<dbReference type="Gene3D" id="1.10.10.10">
    <property type="entry name" value="Winged helix-like DNA-binding domain superfamily/Winged helix DNA-binding domain"/>
    <property type="match status" value="2"/>
</dbReference>
<dbReference type="InterPro" id="IPR007832">
    <property type="entry name" value="RNA_pol_Rpc34"/>
</dbReference>
<dbReference type="InterPro" id="IPR016049">
    <property type="entry name" value="RNA_pol_Rpc34-like"/>
</dbReference>
<dbReference type="InterPro" id="IPR036388">
    <property type="entry name" value="WH-like_DNA-bd_sf"/>
</dbReference>
<dbReference type="InterPro" id="IPR036390">
    <property type="entry name" value="WH_DNA-bd_sf"/>
</dbReference>
<dbReference type="PANTHER" id="PTHR12780">
    <property type="entry name" value="RNA POLYMERASE III DNA DIRECTED , 39KD SUBUNIT-RELATED"/>
    <property type="match status" value="1"/>
</dbReference>
<dbReference type="Pfam" id="PF05158">
    <property type="entry name" value="RNA_pol_Rpc34"/>
    <property type="match status" value="1"/>
</dbReference>
<dbReference type="PIRSF" id="PIRSF028763">
    <property type="entry name" value="RNA_pol_Rpc34"/>
    <property type="match status" value="1"/>
</dbReference>
<dbReference type="SUPFAM" id="SSF46785">
    <property type="entry name" value="Winged helix' DNA-binding domain"/>
    <property type="match status" value="2"/>
</dbReference>
<organism>
    <name type="scientific">Mus musculus</name>
    <name type="common">Mouse</name>
    <dbReference type="NCBI Taxonomy" id="10090"/>
    <lineage>
        <taxon>Eukaryota</taxon>
        <taxon>Metazoa</taxon>
        <taxon>Chordata</taxon>
        <taxon>Craniata</taxon>
        <taxon>Vertebrata</taxon>
        <taxon>Euteleostomi</taxon>
        <taxon>Mammalia</taxon>
        <taxon>Eutheria</taxon>
        <taxon>Euarchontoglires</taxon>
        <taxon>Glires</taxon>
        <taxon>Rodentia</taxon>
        <taxon>Myomorpha</taxon>
        <taxon>Muroidea</taxon>
        <taxon>Muridae</taxon>
        <taxon>Murinae</taxon>
        <taxon>Mus</taxon>
        <taxon>Mus</taxon>
    </lineage>
</organism>
<reference key="1">
    <citation type="journal article" date="2005" name="Science">
        <title>The transcriptional landscape of the mammalian genome.</title>
        <authorList>
            <person name="Carninci P."/>
            <person name="Kasukawa T."/>
            <person name="Katayama S."/>
            <person name="Gough J."/>
            <person name="Frith M.C."/>
            <person name="Maeda N."/>
            <person name="Oyama R."/>
            <person name="Ravasi T."/>
            <person name="Lenhard B."/>
            <person name="Wells C."/>
            <person name="Kodzius R."/>
            <person name="Shimokawa K."/>
            <person name="Bajic V.B."/>
            <person name="Brenner S.E."/>
            <person name="Batalov S."/>
            <person name="Forrest A.R."/>
            <person name="Zavolan M."/>
            <person name="Davis M.J."/>
            <person name="Wilming L.G."/>
            <person name="Aidinis V."/>
            <person name="Allen J.E."/>
            <person name="Ambesi-Impiombato A."/>
            <person name="Apweiler R."/>
            <person name="Aturaliya R.N."/>
            <person name="Bailey T.L."/>
            <person name="Bansal M."/>
            <person name="Baxter L."/>
            <person name="Beisel K.W."/>
            <person name="Bersano T."/>
            <person name="Bono H."/>
            <person name="Chalk A.M."/>
            <person name="Chiu K.P."/>
            <person name="Choudhary V."/>
            <person name="Christoffels A."/>
            <person name="Clutterbuck D.R."/>
            <person name="Crowe M.L."/>
            <person name="Dalla E."/>
            <person name="Dalrymple B.P."/>
            <person name="de Bono B."/>
            <person name="Della Gatta G."/>
            <person name="di Bernardo D."/>
            <person name="Down T."/>
            <person name="Engstrom P."/>
            <person name="Fagiolini M."/>
            <person name="Faulkner G."/>
            <person name="Fletcher C.F."/>
            <person name="Fukushima T."/>
            <person name="Furuno M."/>
            <person name="Futaki S."/>
            <person name="Gariboldi M."/>
            <person name="Georgii-Hemming P."/>
            <person name="Gingeras T.R."/>
            <person name="Gojobori T."/>
            <person name="Green R.E."/>
            <person name="Gustincich S."/>
            <person name="Harbers M."/>
            <person name="Hayashi Y."/>
            <person name="Hensch T.K."/>
            <person name="Hirokawa N."/>
            <person name="Hill D."/>
            <person name="Huminiecki L."/>
            <person name="Iacono M."/>
            <person name="Ikeo K."/>
            <person name="Iwama A."/>
            <person name="Ishikawa T."/>
            <person name="Jakt M."/>
            <person name="Kanapin A."/>
            <person name="Katoh M."/>
            <person name="Kawasawa Y."/>
            <person name="Kelso J."/>
            <person name="Kitamura H."/>
            <person name="Kitano H."/>
            <person name="Kollias G."/>
            <person name="Krishnan S.P."/>
            <person name="Kruger A."/>
            <person name="Kummerfeld S.K."/>
            <person name="Kurochkin I.V."/>
            <person name="Lareau L.F."/>
            <person name="Lazarevic D."/>
            <person name="Lipovich L."/>
            <person name="Liu J."/>
            <person name="Liuni S."/>
            <person name="McWilliam S."/>
            <person name="Madan Babu M."/>
            <person name="Madera M."/>
            <person name="Marchionni L."/>
            <person name="Matsuda H."/>
            <person name="Matsuzawa S."/>
            <person name="Miki H."/>
            <person name="Mignone F."/>
            <person name="Miyake S."/>
            <person name="Morris K."/>
            <person name="Mottagui-Tabar S."/>
            <person name="Mulder N."/>
            <person name="Nakano N."/>
            <person name="Nakauchi H."/>
            <person name="Ng P."/>
            <person name="Nilsson R."/>
            <person name="Nishiguchi S."/>
            <person name="Nishikawa S."/>
            <person name="Nori F."/>
            <person name="Ohara O."/>
            <person name="Okazaki Y."/>
            <person name="Orlando V."/>
            <person name="Pang K.C."/>
            <person name="Pavan W.J."/>
            <person name="Pavesi G."/>
            <person name="Pesole G."/>
            <person name="Petrovsky N."/>
            <person name="Piazza S."/>
            <person name="Reed J."/>
            <person name="Reid J.F."/>
            <person name="Ring B.Z."/>
            <person name="Ringwald M."/>
            <person name="Rost B."/>
            <person name="Ruan Y."/>
            <person name="Salzberg S.L."/>
            <person name="Sandelin A."/>
            <person name="Schneider C."/>
            <person name="Schoenbach C."/>
            <person name="Sekiguchi K."/>
            <person name="Semple C.A."/>
            <person name="Seno S."/>
            <person name="Sessa L."/>
            <person name="Sheng Y."/>
            <person name="Shibata Y."/>
            <person name="Shimada H."/>
            <person name="Shimada K."/>
            <person name="Silva D."/>
            <person name="Sinclair B."/>
            <person name="Sperling S."/>
            <person name="Stupka E."/>
            <person name="Sugiura K."/>
            <person name="Sultana R."/>
            <person name="Takenaka Y."/>
            <person name="Taki K."/>
            <person name="Tammoja K."/>
            <person name="Tan S.L."/>
            <person name="Tang S."/>
            <person name="Taylor M.S."/>
            <person name="Tegner J."/>
            <person name="Teichmann S.A."/>
            <person name="Ueda H.R."/>
            <person name="van Nimwegen E."/>
            <person name="Verardo R."/>
            <person name="Wei C.L."/>
            <person name="Yagi K."/>
            <person name="Yamanishi H."/>
            <person name="Zabarovsky E."/>
            <person name="Zhu S."/>
            <person name="Zimmer A."/>
            <person name="Hide W."/>
            <person name="Bult C."/>
            <person name="Grimmond S.M."/>
            <person name="Teasdale R.D."/>
            <person name="Liu E.T."/>
            <person name="Brusic V."/>
            <person name="Quackenbush J."/>
            <person name="Wahlestedt C."/>
            <person name="Mattick J.S."/>
            <person name="Hume D.A."/>
            <person name="Kai C."/>
            <person name="Sasaki D."/>
            <person name="Tomaru Y."/>
            <person name="Fukuda S."/>
            <person name="Kanamori-Katayama M."/>
            <person name="Suzuki M."/>
            <person name="Aoki J."/>
            <person name="Arakawa T."/>
            <person name="Iida J."/>
            <person name="Imamura K."/>
            <person name="Itoh M."/>
            <person name="Kato T."/>
            <person name="Kawaji H."/>
            <person name="Kawagashira N."/>
            <person name="Kawashima T."/>
            <person name="Kojima M."/>
            <person name="Kondo S."/>
            <person name="Konno H."/>
            <person name="Nakano K."/>
            <person name="Ninomiya N."/>
            <person name="Nishio T."/>
            <person name="Okada M."/>
            <person name="Plessy C."/>
            <person name="Shibata K."/>
            <person name="Shiraki T."/>
            <person name="Suzuki S."/>
            <person name="Tagami M."/>
            <person name="Waki K."/>
            <person name="Watahiki A."/>
            <person name="Okamura-Oho Y."/>
            <person name="Suzuki H."/>
            <person name="Kawai J."/>
            <person name="Hayashizaki Y."/>
        </authorList>
    </citation>
    <scope>NUCLEOTIDE SEQUENCE [LARGE SCALE MRNA]</scope>
    <source>
        <strain>C57BL/6J</strain>
        <tissue>Cerebellum</tissue>
        <tissue>Head</tissue>
        <tissue>Lung</tissue>
    </source>
</reference>
<reference key="2">
    <citation type="journal article" date="2004" name="Genome Res.">
        <title>The status, quality, and expansion of the NIH full-length cDNA project: the Mammalian Gene Collection (MGC).</title>
        <authorList>
            <consortium name="The MGC Project Team"/>
        </authorList>
    </citation>
    <scope>NUCLEOTIDE SEQUENCE [LARGE SCALE MRNA]</scope>
</reference>
<reference key="3">
    <citation type="journal article" date="2010" name="Cell">
        <title>A tissue-specific atlas of mouse protein phosphorylation and expression.</title>
        <authorList>
            <person name="Huttlin E.L."/>
            <person name="Jedrychowski M.P."/>
            <person name="Elias J.E."/>
            <person name="Goswami T."/>
            <person name="Rad R."/>
            <person name="Beausoleil S.A."/>
            <person name="Villen J."/>
            <person name="Haas W."/>
            <person name="Sowa M.E."/>
            <person name="Gygi S.P."/>
        </authorList>
    </citation>
    <scope>IDENTIFICATION BY MASS SPECTROMETRY [LARGE SCALE ANALYSIS]</scope>
    <source>
        <tissue>Spleen</tissue>
        <tissue>Testis</tissue>
    </source>
</reference>
<reference key="4">
    <citation type="submission" date="2006-10" db="PDB data bank">
        <title>Solution structure of RPC34 subunit in RNA polymerase III from mouse.</title>
        <authorList>
            <consortium name="RIKEN structural genomics initiative (RSGI)"/>
        </authorList>
    </citation>
    <scope>STRUCTURE BY NMR OF 11-79</scope>
</reference>
<sequence length="316" mass="35652">MAEVKVKVQPPDADPVEIENRIIELCHQFPHGITDQVIQNEMPHIEAQQRAVAINRLLSMGQLDLLRSNTGLLYRIKDSQNAGKMKGSDNQEKLVYQIIEDAGNKGIWSRDIRYKSNLPLTEINKILKNLESKKLIKAVKSVAASKKKVYMLYNLQPDRSVTGGAWYSDQDFESEFVEVLNQQCFKFLQSKAETARESKQNPVIQRNSSFASSHEVWKYICELGISKVELSMEDIETILNTLIYDGKVEMTIIAAKEGTVGSVDGHMKLYRAVNPILPPTGVVRAPCGLCPVFEDCHEGGEISPSNCIYMTEWLEF</sequence>
<feature type="initiator methionine" description="Removed" evidence="2">
    <location>
        <position position="1"/>
    </location>
</feature>
<feature type="chain" id="PRO_0000073973" description="DNA-directed RNA polymerase III subunit RPC6">
    <location>
        <begin position="2"/>
        <end position="316"/>
    </location>
</feature>
<feature type="binding site" evidence="2">
    <location>
        <position position="287"/>
    </location>
    <ligand>
        <name>[4Fe-4S] cluster</name>
        <dbReference type="ChEBI" id="CHEBI:49883"/>
    </ligand>
</feature>
<feature type="binding site" evidence="2">
    <location>
        <position position="290"/>
    </location>
    <ligand>
        <name>[4Fe-4S] cluster</name>
        <dbReference type="ChEBI" id="CHEBI:49883"/>
    </ligand>
</feature>
<feature type="binding site" evidence="2">
    <location>
        <position position="296"/>
    </location>
    <ligand>
        <name>[4Fe-4S] cluster</name>
        <dbReference type="ChEBI" id="CHEBI:49883"/>
    </ligand>
</feature>
<feature type="binding site" evidence="2">
    <location>
        <position position="307"/>
    </location>
    <ligand>
        <name>[4Fe-4S] cluster</name>
        <dbReference type="ChEBI" id="CHEBI:49883"/>
    </ligand>
</feature>
<feature type="modified residue" description="N-acetylalanine" evidence="2">
    <location>
        <position position="2"/>
    </location>
</feature>
<feature type="cross-link" description="Glycyl lysine isopeptide (Lys-Gly) (interchain with G-Cter in SUMO2)" evidence="2">
    <location>
        <position position="5"/>
    </location>
</feature>
<feature type="cross-link" description="Glycyl lysine isopeptide (Lys-Gly) (interchain with G-Cter in SUMO2)" evidence="2">
    <location>
        <position position="7"/>
    </location>
</feature>
<feature type="strand" evidence="5">
    <location>
        <begin position="11"/>
        <end position="13"/>
    </location>
</feature>
<feature type="helix" evidence="5">
    <location>
        <begin position="15"/>
        <end position="28"/>
    </location>
</feature>
<feature type="helix" evidence="5">
    <location>
        <begin position="35"/>
        <end position="41"/>
    </location>
</feature>
<feature type="helix" evidence="5">
    <location>
        <begin position="47"/>
        <end position="60"/>
    </location>
</feature>
<feature type="strand" evidence="5">
    <location>
        <begin position="62"/>
        <end position="67"/>
    </location>
</feature>
<feature type="strand" evidence="5">
    <location>
        <begin position="69"/>
        <end position="76"/>
    </location>
</feature>
<comment type="function">
    <text evidence="2">DNA-dependent RNA polymerase catalyzes the transcription of DNA into RNA using the four ribonucleoside triphosphates as substrates (By similarity). Specific peripheric component of RNA polymerase III (Pol III) which synthesizes small non-coding RNAs including 5S rRNA, snRNAs, tRNAs and miRNAs from at least 500 distinct genomic loci. Part of POLR3C/RPC3-POLR3F/RPC6-POLR3G/RPC7 heterotrimer that coordinates the dynamics of Pol III stalk and clamp modules during the transition from apo to elongation state (By similarity). Pol III plays a key role in sensing and limiting infection by intracellular bacteria and DNA viruses, including varicella zoster virus. Acts as a nuclear and cytosolic DNA sensor detecting AT-rich DNA, involved in innate immune response. Can sense non-self dsDNA that serves as template for transcription into dsRNA. The non-self RNA polymerase III transcripts, such as Epstein-Barr virus-encoded RNAs (EBERs) induce type I interferon and NF-kappa-B through the RIG-I pathway. Preferentially binds double-stranded DNA (dsDNA) (By similarity).</text>
</comment>
<comment type="subunit">
    <text evidence="1 2">Component of the RNA polymerase III complex consisting of 17 subunits: a ten-subunit horseshoe-shaped catalytic core composed of POLR3A/RPC1, POLR3B/RPC2, POLR1C/RPAC1, POLR1D/RPAC2, POLR3K/RPC10, POLR2E/RPABC1, POLR2F/RPABC2, POLR2H/RPABC3, POLR2K/RPABC4 and POLR2L/RPABC5; a mobile stalk composed of two subunits POLR3H/RPC8 and CRCP/RPC9, protruding from the core and functioning primarily in transcription initiation; and additional subunits homologous to general transcription factors of the RNA polymerase II machinery, POLR3C/RPC3-POLR3F/RPC6-POLR3G/RPC7 heterotrimer required for transcription initiation and POLR3D/RPC4-POLR3E/RPC5 heterodimer involved in both transcription initiation and termination (By similarity). Directly interacts with POLR3C (By similarity). Interacts with TBP and TFIIIB90 and GTF3C4 (By similarity). Interacts with MAF1. As part of the RNA polymerase III complex, interacts with PKP2 (By similarity).</text>
</comment>
<comment type="subcellular location">
    <subcellularLocation>
        <location evidence="2">Nucleus</location>
    </subcellularLocation>
</comment>
<comment type="domain">
    <text evidence="2">The [4FE-4S] cluster-binding domain adopts a globular structure that serves as an interaction hub that connects the POLR3C/RPC3-POLR3F/RPC6-POLR3G/RPC7 heterotrimer to the Pol III core.</text>
</comment>
<comment type="similarity">
    <text evidence="3">Belongs to the eukaryotic RPC34/RPC39 RNA polymerase subunit family.</text>
</comment>
<proteinExistence type="evidence at protein level"/>
<keyword id="KW-0002">3D-structure</keyword>
<keyword id="KW-0007">Acetylation</keyword>
<keyword id="KW-0051">Antiviral defense</keyword>
<keyword id="KW-0240">DNA-directed RNA polymerase</keyword>
<keyword id="KW-0391">Immunity</keyword>
<keyword id="KW-0399">Innate immunity</keyword>
<keyword id="KW-0408">Iron</keyword>
<keyword id="KW-0411">Iron-sulfur</keyword>
<keyword id="KW-1017">Isopeptide bond</keyword>
<keyword id="KW-0479">Metal-binding</keyword>
<keyword id="KW-0539">Nucleus</keyword>
<keyword id="KW-1185">Reference proteome</keyword>
<keyword id="KW-0804">Transcription</keyword>
<keyword id="KW-0832">Ubl conjugation</keyword>
<gene>
    <name evidence="4" type="primary">Polr3f</name>
</gene>